<feature type="chain" id="PRO_0000313273" description="DNA ligase">
    <location>
        <begin position="1"/>
        <end position="674"/>
    </location>
</feature>
<feature type="domain" description="BRCT" evidence="1">
    <location>
        <begin position="596"/>
        <end position="674"/>
    </location>
</feature>
<feature type="active site" description="N6-AMP-lysine intermediate" evidence="1">
    <location>
        <position position="123"/>
    </location>
</feature>
<feature type="binding site" evidence="1">
    <location>
        <begin position="42"/>
        <end position="46"/>
    </location>
    <ligand>
        <name>NAD(+)</name>
        <dbReference type="ChEBI" id="CHEBI:57540"/>
    </ligand>
</feature>
<feature type="binding site" evidence="1">
    <location>
        <begin position="91"/>
        <end position="92"/>
    </location>
    <ligand>
        <name>NAD(+)</name>
        <dbReference type="ChEBI" id="CHEBI:57540"/>
    </ligand>
</feature>
<feature type="binding site" evidence="1">
    <location>
        <position position="121"/>
    </location>
    <ligand>
        <name>NAD(+)</name>
        <dbReference type="ChEBI" id="CHEBI:57540"/>
    </ligand>
</feature>
<feature type="binding site" evidence="1">
    <location>
        <position position="144"/>
    </location>
    <ligand>
        <name>NAD(+)</name>
        <dbReference type="ChEBI" id="CHEBI:57540"/>
    </ligand>
</feature>
<feature type="binding site" evidence="1">
    <location>
        <position position="178"/>
    </location>
    <ligand>
        <name>NAD(+)</name>
        <dbReference type="ChEBI" id="CHEBI:57540"/>
    </ligand>
</feature>
<feature type="binding site" evidence="1">
    <location>
        <position position="294"/>
    </location>
    <ligand>
        <name>NAD(+)</name>
        <dbReference type="ChEBI" id="CHEBI:57540"/>
    </ligand>
</feature>
<feature type="binding site" evidence="1">
    <location>
        <position position="318"/>
    </location>
    <ligand>
        <name>NAD(+)</name>
        <dbReference type="ChEBI" id="CHEBI:57540"/>
    </ligand>
</feature>
<feature type="binding site" evidence="1">
    <location>
        <position position="412"/>
    </location>
    <ligand>
        <name>Zn(2+)</name>
        <dbReference type="ChEBI" id="CHEBI:29105"/>
    </ligand>
</feature>
<feature type="binding site" evidence="1">
    <location>
        <position position="415"/>
    </location>
    <ligand>
        <name>Zn(2+)</name>
        <dbReference type="ChEBI" id="CHEBI:29105"/>
    </ligand>
</feature>
<feature type="binding site" evidence="1">
    <location>
        <position position="430"/>
    </location>
    <ligand>
        <name>Zn(2+)</name>
        <dbReference type="ChEBI" id="CHEBI:29105"/>
    </ligand>
</feature>
<feature type="binding site" evidence="1">
    <location>
        <position position="435"/>
    </location>
    <ligand>
        <name>Zn(2+)</name>
        <dbReference type="ChEBI" id="CHEBI:29105"/>
    </ligand>
</feature>
<accession>Q03AC3</accession>
<protein>
    <recommendedName>
        <fullName evidence="1">DNA ligase</fullName>
        <ecNumber evidence="1">6.5.1.2</ecNumber>
    </recommendedName>
    <alternativeName>
        <fullName evidence="1">Polydeoxyribonucleotide synthase [NAD(+)]</fullName>
    </alternativeName>
</protein>
<proteinExistence type="inferred from homology"/>
<name>DNLJ_LACP3</name>
<evidence type="ECO:0000255" key="1">
    <source>
        <dbReference type="HAMAP-Rule" id="MF_01588"/>
    </source>
</evidence>
<sequence>MLAKPAAQFTLEEAQAEVEKLRKQLNQWRLEYYTKDAPTVTDNVYDDHYRDLQALEEAYPKLVTPDSPTQEVGDVINSDFAKVQHPIPMLSMGDVFSFEELSEWDARMQSNVGHPVDYNVELKIDGLALSLIYENGKLVQGSTRGDGNVGEDVTRNVLTIASVPKQLKQPLSLEVRGECYMPKAAFAKLNARQETEGGTPFANPRNAAAGSLRQLDAKVTAARELDTFIYTLIEPEQFNVTTQHEAIAFMQALGFTTNPSSEVAGDMQAIDTYIKKYTTDRDALPYGIDGIVLKVNDLALQAQLGNTVKVPRWEIAYKFPPEEAETVIHDIVWTVGRTGVVTPTAVMDPVQLAGTTVARATLHNADMIRDKDIRIGDTVMLHKAGDIIPEVSRVLVAKRPADTPPAPIPEVCPSCGQKLVHLDDEVALRCINPMCPAQVQEQLTHFASRNAMNIDGLGPKIVAQLQAKHLVKDVADLYHLTAADLAKLDKFKEKSINNLLSAINNSRQNSVERLIFGLGIRHVGGKAARILAEHFGDLDHLMTASQEAIADVPNIGPTIGEAIVTYFKAATVQKLITQLREADVNLRYTGPTKPVVKDSFVAGKTVVITGKFAEFSRPALTKQLEGLGAKVTGSVSKKTDILIAGDAAGSKLAKAQSLNVPIMNETELLANLKD</sequence>
<comment type="function">
    <text evidence="1">DNA ligase that catalyzes the formation of phosphodiester linkages between 5'-phosphoryl and 3'-hydroxyl groups in double-stranded DNA using NAD as a coenzyme and as the energy source for the reaction. It is essential for DNA replication and repair of damaged DNA.</text>
</comment>
<comment type="catalytic activity">
    <reaction evidence="1">
        <text>NAD(+) + (deoxyribonucleotide)n-3'-hydroxyl + 5'-phospho-(deoxyribonucleotide)m = (deoxyribonucleotide)n+m + AMP + beta-nicotinamide D-nucleotide.</text>
        <dbReference type="EC" id="6.5.1.2"/>
    </reaction>
</comment>
<comment type="cofactor">
    <cofactor evidence="1">
        <name>Mg(2+)</name>
        <dbReference type="ChEBI" id="CHEBI:18420"/>
    </cofactor>
    <cofactor evidence="1">
        <name>Mn(2+)</name>
        <dbReference type="ChEBI" id="CHEBI:29035"/>
    </cofactor>
</comment>
<comment type="similarity">
    <text evidence="1">Belongs to the NAD-dependent DNA ligase family. LigA subfamily.</text>
</comment>
<keyword id="KW-0227">DNA damage</keyword>
<keyword id="KW-0234">DNA repair</keyword>
<keyword id="KW-0235">DNA replication</keyword>
<keyword id="KW-0436">Ligase</keyword>
<keyword id="KW-0460">Magnesium</keyword>
<keyword id="KW-0464">Manganese</keyword>
<keyword id="KW-0479">Metal-binding</keyword>
<keyword id="KW-0520">NAD</keyword>
<keyword id="KW-1185">Reference proteome</keyword>
<keyword id="KW-0862">Zinc</keyword>
<reference key="1">
    <citation type="journal article" date="2006" name="Proc. Natl. Acad. Sci. U.S.A.">
        <title>Comparative genomics of the lactic acid bacteria.</title>
        <authorList>
            <person name="Makarova K.S."/>
            <person name="Slesarev A."/>
            <person name="Wolf Y.I."/>
            <person name="Sorokin A."/>
            <person name="Mirkin B."/>
            <person name="Koonin E.V."/>
            <person name="Pavlov A."/>
            <person name="Pavlova N."/>
            <person name="Karamychev V."/>
            <person name="Polouchine N."/>
            <person name="Shakhova V."/>
            <person name="Grigoriev I."/>
            <person name="Lou Y."/>
            <person name="Rohksar D."/>
            <person name="Lucas S."/>
            <person name="Huang K."/>
            <person name="Goodstein D.M."/>
            <person name="Hawkins T."/>
            <person name="Plengvidhya V."/>
            <person name="Welker D."/>
            <person name="Hughes J."/>
            <person name="Goh Y."/>
            <person name="Benson A."/>
            <person name="Baldwin K."/>
            <person name="Lee J.-H."/>
            <person name="Diaz-Muniz I."/>
            <person name="Dosti B."/>
            <person name="Smeianov V."/>
            <person name="Wechter W."/>
            <person name="Barabote R."/>
            <person name="Lorca G."/>
            <person name="Altermann E."/>
            <person name="Barrangou R."/>
            <person name="Ganesan B."/>
            <person name="Xie Y."/>
            <person name="Rawsthorne H."/>
            <person name="Tamir D."/>
            <person name="Parker C."/>
            <person name="Breidt F."/>
            <person name="Broadbent J.R."/>
            <person name="Hutkins R."/>
            <person name="O'Sullivan D."/>
            <person name="Steele J."/>
            <person name="Unlu G."/>
            <person name="Saier M.H. Jr."/>
            <person name="Klaenhammer T."/>
            <person name="Richardson P."/>
            <person name="Kozyavkin S."/>
            <person name="Weimer B.C."/>
            <person name="Mills D.A."/>
        </authorList>
    </citation>
    <scope>NUCLEOTIDE SEQUENCE [LARGE SCALE GENOMIC DNA]</scope>
    <source>
        <strain>ATCC 334 / BCRC 17002 / CCUG 31169 / CIP 107868 / KCTC 3260 / NRRL B-441</strain>
    </source>
</reference>
<dbReference type="EC" id="6.5.1.2" evidence="1"/>
<dbReference type="EMBL" id="CP000423">
    <property type="protein sequence ID" value="ABJ69849.1"/>
    <property type="molecule type" value="Genomic_DNA"/>
</dbReference>
<dbReference type="RefSeq" id="WP_011674370.1">
    <property type="nucleotide sequence ID" value="NC_008526.1"/>
</dbReference>
<dbReference type="RefSeq" id="YP_806291.1">
    <property type="nucleotide sequence ID" value="NC_008526.1"/>
</dbReference>
<dbReference type="SMR" id="Q03AC3"/>
<dbReference type="STRING" id="321967.LSEI_1055"/>
<dbReference type="PaxDb" id="321967-LSEI_1055"/>
<dbReference type="KEGG" id="lca:LSEI_1055"/>
<dbReference type="PATRIC" id="fig|321967.11.peg.1027"/>
<dbReference type="HOGENOM" id="CLU_007764_2_1_9"/>
<dbReference type="Proteomes" id="UP000001651">
    <property type="component" value="Chromosome"/>
</dbReference>
<dbReference type="GO" id="GO:0005829">
    <property type="term" value="C:cytosol"/>
    <property type="evidence" value="ECO:0007669"/>
    <property type="project" value="TreeGrafter"/>
</dbReference>
<dbReference type="GO" id="GO:0003911">
    <property type="term" value="F:DNA ligase (NAD+) activity"/>
    <property type="evidence" value="ECO:0007669"/>
    <property type="project" value="UniProtKB-UniRule"/>
</dbReference>
<dbReference type="GO" id="GO:0046872">
    <property type="term" value="F:metal ion binding"/>
    <property type="evidence" value="ECO:0007669"/>
    <property type="project" value="UniProtKB-KW"/>
</dbReference>
<dbReference type="GO" id="GO:0006281">
    <property type="term" value="P:DNA repair"/>
    <property type="evidence" value="ECO:0007669"/>
    <property type="project" value="UniProtKB-KW"/>
</dbReference>
<dbReference type="GO" id="GO:0006260">
    <property type="term" value="P:DNA replication"/>
    <property type="evidence" value="ECO:0007669"/>
    <property type="project" value="UniProtKB-KW"/>
</dbReference>
<dbReference type="CDD" id="cd17748">
    <property type="entry name" value="BRCT_DNA_ligase_like"/>
    <property type="match status" value="1"/>
</dbReference>
<dbReference type="CDD" id="cd00114">
    <property type="entry name" value="LIGANc"/>
    <property type="match status" value="1"/>
</dbReference>
<dbReference type="FunFam" id="1.10.150.20:FF:000006">
    <property type="entry name" value="DNA ligase"/>
    <property type="match status" value="1"/>
</dbReference>
<dbReference type="FunFam" id="1.10.150.20:FF:000007">
    <property type="entry name" value="DNA ligase"/>
    <property type="match status" value="1"/>
</dbReference>
<dbReference type="FunFam" id="2.40.50.140:FF:000012">
    <property type="entry name" value="DNA ligase"/>
    <property type="match status" value="1"/>
</dbReference>
<dbReference type="FunFam" id="3.30.470.30:FF:000001">
    <property type="entry name" value="DNA ligase"/>
    <property type="match status" value="1"/>
</dbReference>
<dbReference type="Gene3D" id="6.20.10.30">
    <property type="match status" value="1"/>
</dbReference>
<dbReference type="Gene3D" id="1.10.150.20">
    <property type="entry name" value="5' to 3' exonuclease, C-terminal subdomain"/>
    <property type="match status" value="2"/>
</dbReference>
<dbReference type="Gene3D" id="3.40.50.10190">
    <property type="entry name" value="BRCT domain"/>
    <property type="match status" value="1"/>
</dbReference>
<dbReference type="Gene3D" id="3.30.470.30">
    <property type="entry name" value="DNA ligase/mRNA capping enzyme"/>
    <property type="match status" value="1"/>
</dbReference>
<dbReference type="Gene3D" id="1.10.287.610">
    <property type="entry name" value="Helix hairpin bin"/>
    <property type="match status" value="1"/>
</dbReference>
<dbReference type="Gene3D" id="2.40.50.140">
    <property type="entry name" value="Nucleic acid-binding proteins"/>
    <property type="match status" value="1"/>
</dbReference>
<dbReference type="HAMAP" id="MF_01588">
    <property type="entry name" value="DNA_ligase_A"/>
    <property type="match status" value="1"/>
</dbReference>
<dbReference type="InterPro" id="IPR001357">
    <property type="entry name" value="BRCT_dom"/>
</dbReference>
<dbReference type="InterPro" id="IPR036420">
    <property type="entry name" value="BRCT_dom_sf"/>
</dbReference>
<dbReference type="InterPro" id="IPR041663">
    <property type="entry name" value="DisA/LigA_HHH"/>
</dbReference>
<dbReference type="InterPro" id="IPR001679">
    <property type="entry name" value="DNA_ligase"/>
</dbReference>
<dbReference type="InterPro" id="IPR018239">
    <property type="entry name" value="DNA_ligase_AS"/>
</dbReference>
<dbReference type="InterPro" id="IPR033136">
    <property type="entry name" value="DNA_ligase_CS"/>
</dbReference>
<dbReference type="InterPro" id="IPR013839">
    <property type="entry name" value="DNAligase_adenylation"/>
</dbReference>
<dbReference type="InterPro" id="IPR013840">
    <property type="entry name" value="DNAligase_N"/>
</dbReference>
<dbReference type="InterPro" id="IPR012340">
    <property type="entry name" value="NA-bd_OB-fold"/>
</dbReference>
<dbReference type="InterPro" id="IPR004150">
    <property type="entry name" value="NAD_DNA_ligase_OB"/>
</dbReference>
<dbReference type="InterPro" id="IPR010994">
    <property type="entry name" value="RuvA_2-like"/>
</dbReference>
<dbReference type="InterPro" id="IPR004149">
    <property type="entry name" value="Znf_DNAligase_C4"/>
</dbReference>
<dbReference type="NCBIfam" id="TIGR00575">
    <property type="entry name" value="dnlj"/>
    <property type="match status" value="1"/>
</dbReference>
<dbReference type="NCBIfam" id="NF005932">
    <property type="entry name" value="PRK07956.1"/>
    <property type="match status" value="1"/>
</dbReference>
<dbReference type="PANTHER" id="PTHR23389">
    <property type="entry name" value="CHROMOSOME TRANSMISSION FIDELITY FACTOR 18"/>
    <property type="match status" value="1"/>
</dbReference>
<dbReference type="PANTHER" id="PTHR23389:SF9">
    <property type="entry name" value="DNA LIGASE"/>
    <property type="match status" value="1"/>
</dbReference>
<dbReference type="Pfam" id="PF00533">
    <property type="entry name" value="BRCT"/>
    <property type="match status" value="1"/>
</dbReference>
<dbReference type="Pfam" id="PF01653">
    <property type="entry name" value="DNA_ligase_aden"/>
    <property type="match status" value="1"/>
</dbReference>
<dbReference type="Pfam" id="PF03120">
    <property type="entry name" value="DNA_ligase_OB"/>
    <property type="match status" value="1"/>
</dbReference>
<dbReference type="Pfam" id="PF03119">
    <property type="entry name" value="DNA_ligase_ZBD"/>
    <property type="match status" value="1"/>
</dbReference>
<dbReference type="Pfam" id="PF12826">
    <property type="entry name" value="HHH_2"/>
    <property type="match status" value="1"/>
</dbReference>
<dbReference type="PIRSF" id="PIRSF001604">
    <property type="entry name" value="LigA"/>
    <property type="match status" value="1"/>
</dbReference>
<dbReference type="SMART" id="SM00292">
    <property type="entry name" value="BRCT"/>
    <property type="match status" value="1"/>
</dbReference>
<dbReference type="SMART" id="SM00532">
    <property type="entry name" value="LIGANc"/>
    <property type="match status" value="1"/>
</dbReference>
<dbReference type="SUPFAM" id="SSF52113">
    <property type="entry name" value="BRCT domain"/>
    <property type="match status" value="1"/>
</dbReference>
<dbReference type="SUPFAM" id="SSF56091">
    <property type="entry name" value="DNA ligase/mRNA capping enzyme, catalytic domain"/>
    <property type="match status" value="1"/>
</dbReference>
<dbReference type="SUPFAM" id="SSF50249">
    <property type="entry name" value="Nucleic acid-binding proteins"/>
    <property type="match status" value="1"/>
</dbReference>
<dbReference type="SUPFAM" id="SSF47781">
    <property type="entry name" value="RuvA domain 2-like"/>
    <property type="match status" value="1"/>
</dbReference>
<dbReference type="PROSITE" id="PS50172">
    <property type="entry name" value="BRCT"/>
    <property type="match status" value="1"/>
</dbReference>
<dbReference type="PROSITE" id="PS01055">
    <property type="entry name" value="DNA_LIGASE_N1"/>
    <property type="match status" value="1"/>
</dbReference>
<dbReference type="PROSITE" id="PS01056">
    <property type="entry name" value="DNA_LIGASE_N2"/>
    <property type="match status" value="1"/>
</dbReference>
<gene>
    <name evidence="1" type="primary">ligA</name>
    <name type="ordered locus">LSEI_1055</name>
</gene>
<organism>
    <name type="scientific">Lacticaseibacillus paracasei (strain ATCC 334 / BCRC 17002 / CCUG 31169 / CIP 107868 / KCTC 3260 / NRRL B-441)</name>
    <name type="common">Lactobacillus paracasei</name>
    <dbReference type="NCBI Taxonomy" id="321967"/>
    <lineage>
        <taxon>Bacteria</taxon>
        <taxon>Bacillati</taxon>
        <taxon>Bacillota</taxon>
        <taxon>Bacilli</taxon>
        <taxon>Lactobacillales</taxon>
        <taxon>Lactobacillaceae</taxon>
        <taxon>Lacticaseibacillus</taxon>
    </lineage>
</organism>